<accession>Q08925</accession>
<accession>D6W3I4</accession>
<sequence>MVVSYNNNNNNNNNNNNNNISNNNNNNNMFPPFPSSDDFAMYQQSSSSGPYQETYASGPQNFGDAVYPMNGNFTLLPSDFTREPNDSFFYENDGIFDYQRIQQQPTQFQTKQRNDSQQQRFSQEQNFEIDNEVVHNNNRYYEYERSSNEVSPFDDENPNVLSDGMSPTIMATATAVTNANAPLPVNAQANNPLNFTSAPSRTVYLGNVPPNLSVKELLDHVRSGVVEDVKIIPEKMCAFVSFIDESAALLFHSDAILKRLNIGDRDIKIGWGKPTRIDPIVAARISTDGATRNVYIGRMTIEGEESHLSEEQLRVDLEEYGEIDCIKIIKEKGIAFIHFASILNAIKVVTNLPIRNPYYQNKRIFYGKDRCAFITKTQQHNAAQFLGVQPGMEHMIEFSDREFISNALLQQSAAAAAIATSAGGPNNLGNRTVYLGSLPKDVKIEEICNAVRGGLLQSIKLLNDRYVCFVTFIDPTAAAQFYAMSSLYGFTVQKKRCKVGWGKHSGPLPNALALAVSNGASRNVYVGNIDFVGDSLRDERVFTESNLRHIFQQYGEVEQINFLPEKNCCFINYTNISNAILALDKIKSNPYFKDLKINFGKDRCGNVPHQSR</sequence>
<protein>
    <recommendedName>
        <fullName>RNA-binding protein MRN1</fullName>
    </recommendedName>
    <alternativeName>
        <fullName>Multicopy suppressor of RSC-NHP6 synthetic lethality protein 1</fullName>
    </alternativeName>
    <alternativeName>
        <fullName>Post-transcriptional regulator of 69 kDa</fullName>
    </alternativeName>
</protein>
<proteinExistence type="evidence at protein level"/>
<name>MRN1_YEAST</name>
<dbReference type="EMBL" id="Z73540">
    <property type="protein sequence ID" value="CAA97894.1"/>
    <property type="molecule type" value="Genomic_DNA"/>
</dbReference>
<dbReference type="EMBL" id="BK006949">
    <property type="protein sequence ID" value="DAA11250.1"/>
    <property type="molecule type" value="Genomic_DNA"/>
</dbReference>
<dbReference type="PIR" id="S65196">
    <property type="entry name" value="S65196"/>
</dbReference>
<dbReference type="RefSeq" id="NP_015140.1">
    <property type="nucleotide sequence ID" value="NM_001183998.1"/>
</dbReference>
<dbReference type="SMR" id="Q08925"/>
<dbReference type="BioGRID" id="35998">
    <property type="interactions" value="273"/>
</dbReference>
<dbReference type="FunCoup" id="Q08925">
    <property type="interactions" value="210"/>
</dbReference>
<dbReference type="IntAct" id="Q08925">
    <property type="interactions" value="8"/>
</dbReference>
<dbReference type="MINT" id="Q08925"/>
<dbReference type="STRING" id="4932.YPL184C"/>
<dbReference type="iPTMnet" id="Q08925"/>
<dbReference type="PaxDb" id="4932-YPL184C"/>
<dbReference type="PeptideAtlas" id="Q08925"/>
<dbReference type="EnsemblFungi" id="YPL184C_mRNA">
    <property type="protein sequence ID" value="YPL184C"/>
    <property type="gene ID" value="YPL184C"/>
</dbReference>
<dbReference type="GeneID" id="855917"/>
<dbReference type="KEGG" id="sce:YPL184C"/>
<dbReference type="AGR" id="SGD:S000006105"/>
<dbReference type="SGD" id="S000006105">
    <property type="gene designation" value="MRN1"/>
</dbReference>
<dbReference type="VEuPathDB" id="FungiDB:YPL184C"/>
<dbReference type="eggNOG" id="KOG0118">
    <property type="taxonomic scope" value="Eukaryota"/>
</dbReference>
<dbReference type="HOGENOM" id="CLU_017390_1_0_1"/>
<dbReference type="InParanoid" id="Q08925"/>
<dbReference type="OMA" id="YGRDRCA"/>
<dbReference type="OrthoDB" id="6407164at2759"/>
<dbReference type="BioCyc" id="YEAST:G3O-34078-MONOMER"/>
<dbReference type="BioGRID-ORCS" id="855917">
    <property type="hits" value="8 hits in 10 CRISPR screens"/>
</dbReference>
<dbReference type="CD-CODE" id="E03F929F">
    <property type="entry name" value="Stress granule"/>
</dbReference>
<dbReference type="PRO" id="PR:Q08925"/>
<dbReference type="Proteomes" id="UP000002311">
    <property type="component" value="Chromosome XVI"/>
</dbReference>
<dbReference type="RNAct" id="Q08925">
    <property type="molecule type" value="protein"/>
</dbReference>
<dbReference type="GO" id="GO:0005737">
    <property type="term" value="C:cytoplasm"/>
    <property type="evidence" value="ECO:0000314"/>
    <property type="project" value="SGD"/>
</dbReference>
<dbReference type="GO" id="GO:0010494">
    <property type="term" value="C:cytoplasmic stress granule"/>
    <property type="evidence" value="ECO:0007005"/>
    <property type="project" value="SGD"/>
</dbReference>
<dbReference type="GO" id="GO:0005634">
    <property type="term" value="C:nucleus"/>
    <property type="evidence" value="ECO:0000314"/>
    <property type="project" value="SGD"/>
</dbReference>
<dbReference type="GO" id="GO:0000932">
    <property type="term" value="C:P-body"/>
    <property type="evidence" value="ECO:0000314"/>
    <property type="project" value="SGD"/>
</dbReference>
<dbReference type="GO" id="GO:0003730">
    <property type="term" value="F:mRNA 3'-UTR binding"/>
    <property type="evidence" value="ECO:0000314"/>
    <property type="project" value="SGD"/>
</dbReference>
<dbReference type="GO" id="GO:0003729">
    <property type="term" value="F:mRNA binding"/>
    <property type="evidence" value="ECO:0007005"/>
    <property type="project" value="SGD"/>
</dbReference>
<dbReference type="GO" id="GO:0061158">
    <property type="term" value="P:3'-UTR-mediated mRNA destabilization"/>
    <property type="evidence" value="ECO:0000315"/>
    <property type="project" value="SGD"/>
</dbReference>
<dbReference type="GO" id="GO:1990394">
    <property type="term" value="P:cellular response to cell wall damage"/>
    <property type="evidence" value="ECO:0000315"/>
    <property type="project" value="SGD"/>
</dbReference>
<dbReference type="GO" id="GO:0006338">
    <property type="term" value="P:chromatin remodeling"/>
    <property type="evidence" value="ECO:0000316"/>
    <property type="project" value="SGD"/>
</dbReference>
<dbReference type="GO" id="GO:0000398">
    <property type="term" value="P:mRNA splicing, via spliceosome"/>
    <property type="evidence" value="ECO:0000316"/>
    <property type="project" value="SGD"/>
</dbReference>
<dbReference type="GO" id="GO:0006417">
    <property type="term" value="P:regulation of translation"/>
    <property type="evidence" value="ECO:0007669"/>
    <property type="project" value="UniProtKB-KW"/>
</dbReference>
<dbReference type="CDD" id="cd12520">
    <property type="entry name" value="RRM1_MRN1"/>
    <property type="match status" value="1"/>
</dbReference>
<dbReference type="CDD" id="cd12523">
    <property type="entry name" value="RRM2_MRN1"/>
    <property type="match status" value="1"/>
</dbReference>
<dbReference type="CDD" id="cd12521">
    <property type="entry name" value="RRM3_MRN1"/>
    <property type="match status" value="1"/>
</dbReference>
<dbReference type="FunFam" id="3.30.70.330:FF:000047">
    <property type="entry name" value="Differentiation 1 negative regulator"/>
    <property type="match status" value="1"/>
</dbReference>
<dbReference type="FunFam" id="3.30.70.330:FF:000064">
    <property type="entry name" value="Differentiation 1 negative regulator"/>
    <property type="match status" value="1"/>
</dbReference>
<dbReference type="FunFam" id="3.30.70.330:FF:000120">
    <property type="entry name" value="Negative regulator of differentiation 1"/>
    <property type="match status" value="1"/>
</dbReference>
<dbReference type="FunFam" id="3.30.70.330:FF:000628">
    <property type="entry name" value="RNA binding protein"/>
    <property type="match status" value="1"/>
</dbReference>
<dbReference type="Gene3D" id="3.30.70.330">
    <property type="match status" value="4"/>
</dbReference>
<dbReference type="InterPro" id="IPR039171">
    <property type="entry name" value="Cwc2/Slt11"/>
</dbReference>
<dbReference type="InterPro" id="IPR034195">
    <property type="entry name" value="Mrn1_RRM1"/>
</dbReference>
<dbReference type="InterPro" id="IPR012677">
    <property type="entry name" value="Nucleotide-bd_a/b_plait_sf"/>
</dbReference>
<dbReference type="InterPro" id="IPR035979">
    <property type="entry name" value="RBD_domain_sf"/>
</dbReference>
<dbReference type="InterPro" id="IPR000504">
    <property type="entry name" value="RRM_dom"/>
</dbReference>
<dbReference type="PANTHER" id="PTHR14089">
    <property type="entry name" value="PRE-MRNA-SPLICING FACTOR RBM22"/>
    <property type="match status" value="1"/>
</dbReference>
<dbReference type="PANTHER" id="PTHR14089:SF8">
    <property type="entry name" value="RNA-BINDING PROTEIN MRN1"/>
    <property type="match status" value="1"/>
</dbReference>
<dbReference type="Pfam" id="PF00076">
    <property type="entry name" value="RRM_1"/>
    <property type="match status" value="1"/>
</dbReference>
<dbReference type="SMART" id="SM00360">
    <property type="entry name" value="RRM"/>
    <property type="match status" value="4"/>
</dbReference>
<dbReference type="SUPFAM" id="SSF54928">
    <property type="entry name" value="RNA-binding domain, RBD"/>
    <property type="match status" value="3"/>
</dbReference>
<dbReference type="PROSITE" id="PS50102">
    <property type="entry name" value="RRM"/>
    <property type="match status" value="4"/>
</dbReference>
<feature type="chain" id="PRO_0000082038" description="RNA-binding protein MRN1">
    <location>
        <begin position="1"/>
        <end position="612"/>
    </location>
</feature>
<feature type="domain" description="RRM 1" evidence="1">
    <location>
        <begin position="201"/>
        <end position="274"/>
    </location>
</feature>
<feature type="domain" description="RRM 2" evidence="1">
    <location>
        <begin position="292"/>
        <end position="379"/>
    </location>
</feature>
<feature type="domain" description="RRM 3" evidence="1">
    <location>
        <begin position="431"/>
        <end position="504"/>
    </location>
</feature>
<feature type="domain" description="RRM 4" evidence="1">
    <location>
        <begin position="522"/>
        <end position="602"/>
    </location>
</feature>
<feature type="region of interest" description="Disordered" evidence="2">
    <location>
        <begin position="1"/>
        <end position="57"/>
    </location>
</feature>
<feature type="region of interest" description="Disordered" evidence="2">
    <location>
        <begin position="105"/>
        <end position="125"/>
    </location>
</feature>
<feature type="compositionally biased region" description="Low complexity" evidence="2">
    <location>
        <begin position="1"/>
        <end position="28"/>
    </location>
</feature>
<feature type="compositionally biased region" description="Polar residues" evidence="2">
    <location>
        <begin position="42"/>
        <end position="57"/>
    </location>
</feature>
<feature type="compositionally biased region" description="Polar residues" evidence="2">
    <location>
        <begin position="115"/>
        <end position="125"/>
    </location>
</feature>
<evidence type="ECO:0000255" key="1">
    <source>
        <dbReference type="PROSITE-ProRule" id="PRU00176"/>
    </source>
</evidence>
<evidence type="ECO:0000256" key="2">
    <source>
        <dbReference type="SAM" id="MobiDB-lite"/>
    </source>
</evidence>
<evidence type="ECO:0000269" key="3">
    <source>
    </source>
</evidence>
<evidence type="ECO:0000269" key="4">
    <source>
    </source>
</evidence>
<evidence type="ECO:0000269" key="5">
    <source>
    </source>
</evidence>
<comment type="function">
    <text evidence="5">RNA-binding protein that binds specific categories of mRNAs, including those that contain upstream open reading frames (uORFs) and internal ribosome entry sites (IRES). Probably involved in translational regulation.</text>
</comment>
<comment type="subcellular location">
    <subcellularLocation>
        <location evidence="3">Cytoplasm</location>
    </subcellularLocation>
</comment>
<comment type="miscellaneous">
    <text evidence="4">Present with 7950 molecules/cell in log phase SD medium.</text>
</comment>
<organism>
    <name type="scientific">Saccharomyces cerevisiae (strain ATCC 204508 / S288c)</name>
    <name type="common">Baker's yeast</name>
    <dbReference type="NCBI Taxonomy" id="559292"/>
    <lineage>
        <taxon>Eukaryota</taxon>
        <taxon>Fungi</taxon>
        <taxon>Dikarya</taxon>
        <taxon>Ascomycota</taxon>
        <taxon>Saccharomycotina</taxon>
        <taxon>Saccharomycetes</taxon>
        <taxon>Saccharomycetales</taxon>
        <taxon>Saccharomycetaceae</taxon>
        <taxon>Saccharomyces</taxon>
    </lineage>
</organism>
<keyword id="KW-0963">Cytoplasm</keyword>
<keyword id="KW-1185">Reference proteome</keyword>
<keyword id="KW-0677">Repeat</keyword>
<keyword id="KW-0694">RNA-binding</keyword>
<keyword id="KW-0810">Translation regulation</keyword>
<gene>
    <name type="primary">MRN1</name>
    <name type="synonym">PTR69</name>
    <name type="ordered locus">YPL184C</name>
</gene>
<reference key="1">
    <citation type="journal article" date="1997" name="Nature">
        <title>The nucleotide sequence of Saccharomyces cerevisiae chromosome XVI.</title>
        <authorList>
            <person name="Bussey H."/>
            <person name="Storms R.K."/>
            <person name="Ahmed A."/>
            <person name="Albermann K."/>
            <person name="Allen E."/>
            <person name="Ansorge W."/>
            <person name="Araujo R."/>
            <person name="Aparicio A."/>
            <person name="Barrell B.G."/>
            <person name="Badcock K."/>
            <person name="Benes V."/>
            <person name="Botstein D."/>
            <person name="Bowman S."/>
            <person name="Brueckner M."/>
            <person name="Carpenter J."/>
            <person name="Cherry J.M."/>
            <person name="Chung E."/>
            <person name="Churcher C.M."/>
            <person name="Coster F."/>
            <person name="Davis K."/>
            <person name="Davis R.W."/>
            <person name="Dietrich F.S."/>
            <person name="Delius H."/>
            <person name="DiPaolo T."/>
            <person name="Dubois E."/>
            <person name="Duesterhoeft A."/>
            <person name="Duncan M."/>
            <person name="Floeth M."/>
            <person name="Fortin N."/>
            <person name="Friesen J.D."/>
            <person name="Fritz C."/>
            <person name="Goffeau A."/>
            <person name="Hall J."/>
            <person name="Hebling U."/>
            <person name="Heumann K."/>
            <person name="Hilbert H."/>
            <person name="Hillier L.W."/>
            <person name="Hunicke-Smith S."/>
            <person name="Hyman R.W."/>
            <person name="Johnston M."/>
            <person name="Kalman S."/>
            <person name="Kleine K."/>
            <person name="Komp C."/>
            <person name="Kurdi O."/>
            <person name="Lashkari D."/>
            <person name="Lew H."/>
            <person name="Lin A."/>
            <person name="Lin D."/>
            <person name="Louis E.J."/>
            <person name="Marathe R."/>
            <person name="Messenguy F."/>
            <person name="Mewes H.-W."/>
            <person name="Mirtipati S."/>
            <person name="Moestl D."/>
            <person name="Mueller-Auer S."/>
            <person name="Namath A."/>
            <person name="Nentwich U."/>
            <person name="Oefner P."/>
            <person name="Pearson D."/>
            <person name="Petel F.X."/>
            <person name="Pohl T.M."/>
            <person name="Purnelle B."/>
            <person name="Rajandream M.A."/>
            <person name="Rechmann S."/>
            <person name="Rieger M."/>
            <person name="Riles L."/>
            <person name="Roberts D."/>
            <person name="Schaefer M."/>
            <person name="Scharfe M."/>
            <person name="Scherens B."/>
            <person name="Schramm S."/>
            <person name="Schroeder M."/>
            <person name="Sdicu A.-M."/>
            <person name="Tettelin H."/>
            <person name="Urrestarazu L.A."/>
            <person name="Ushinsky S."/>
            <person name="Vierendeels F."/>
            <person name="Vissers S."/>
            <person name="Voss H."/>
            <person name="Walsh S.V."/>
            <person name="Wambutt R."/>
            <person name="Wang Y."/>
            <person name="Wedler E."/>
            <person name="Wedler H."/>
            <person name="Winnett E."/>
            <person name="Zhong W.-W."/>
            <person name="Zollner A."/>
            <person name="Vo D.H."/>
            <person name="Hani J."/>
        </authorList>
    </citation>
    <scope>NUCLEOTIDE SEQUENCE [LARGE SCALE GENOMIC DNA]</scope>
    <source>
        <strain>ATCC 204508 / S288c</strain>
    </source>
</reference>
<reference key="2">
    <citation type="journal article" date="2014" name="G3 (Bethesda)">
        <title>The reference genome sequence of Saccharomyces cerevisiae: Then and now.</title>
        <authorList>
            <person name="Engel S.R."/>
            <person name="Dietrich F.S."/>
            <person name="Fisk D.G."/>
            <person name="Binkley G."/>
            <person name="Balakrishnan R."/>
            <person name="Costanzo M.C."/>
            <person name="Dwight S.S."/>
            <person name="Hitz B.C."/>
            <person name="Karra K."/>
            <person name="Nash R.S."/>
            <person name="Weng S."/>
            <person name="Wong E.D."/>
            <person name="Lloyd P."/>
            <person name="Skrzypek M.S."/>
            <person name="Miyasato S.R."/>
            <person name="Simison M."/>
            <person name="Cherry J.M."/>
        </authorList>
    </citation>
    <scope>GENOME REANNOTATION</scope>
    <source>
        <strain>ATCC 204508 / S288c</strain>
    </source>
</reference>
<reference key="3">
    <citation type="journal article" date="2003" name="Nature">
        <title>Global analysis of protein localization in budding yeast.</title>
        <authorList>
            <person name="Huh W.-K."/>
            <person name="Falvo J.V."/>
            <person name="Gerke L.C."/>
            <person name="Carroll A.S."/>
            <person name="Howson R.W."/>
            <person name="Weissman J.S."/>
            <person name="O'Shea E.K."/>
        </authorList>
    </citation>
    <scope>SUBCELLULAR LOCATION [LARGE SCALE ANALYSIS]</scope>
</reference>
<reference key="4">
    <citation type="journal article" date="2003" name="Nature">
        <title>Global analysis of protein expression in yeast.</title>
        <authorList>
            <person name="Ghaemmaghami S."/>
            <person name="Huh W.-K."/>
            <person name="Bower K."/>
            <person name="Howson R.W."/>
            <person name="Belle A."/>
            <person name="Dephoure N."/>
            <person name="O'Shea E.K."/>
            <person name="Weissman J.S."/>
        </authorList>
    </citation>
    <scope>LEVEL OF PROTEIN EXPRESSION [LARGE SCALE ANALYSIS]</scope>
</reference>
<reference key="5">
    <citation type="journal article" date="2008" name="PLoS Biol.">
        <title>Diverse RNA-binding proteins interact with functionally related sets of RNAs, suggesting an extensive regulatory system.</title>
        <authorList>
            <person name="Hogan D.J."/>
            <person name="Riordan D.P."/>
            <person name="Gerber A.P."/>
            <person name="Herschlag D."/>
            <person name="Brown P.O."/>
        </authorList>
    </citation>
    <scope>RNA-BINDING</scope>
    <scope>FUNCTION</scope>
</reference>
<reference key="6">
    <citation type="journal article" date="2011" name="Nucleic Acids Res.">
        <title>Identification of RNA recognition elements in the Saccharomyces cerevisiae transcriptome.</title>
        <authorList>
            <person name="Riordan D.P."/>
            <person name="Herschlag D."/>
            <person name="Brown P.O."/>
        </authorList>
    </citation>
    <scope>RNA-BINDING</scope>
</reference>